<gene>
    <name type="primary">ycaD</name>
    <name type="ordered locus">b0898</name>
    <name type="ordered locus">JW0881</name>
</gene>
<evidence type="ECO:0000255" key="1"/>
<evidence type="ECO:0000305" key="2"/>
<protein>
    <recommendedName>
        <fullName>Uncharacterized MFS-type transporter YcaD</fullName>
    </recommendedName>
</protein>
<accession>P21503</accession>
<accession>P75834</accession>
<comment type="subcellular location">
    <subcellularLocation>
        <location>Cell inner membrane</location>
        <topology>Multi-pass membrane protein</topology>
    </subcellularLocation>
</comment>
<comment type="similarity">
    <text evidence="2">Belongs to the major facilitator superfamily. YcaD (TC 2.A.1.26) family.</text>
</comment>
<name>YCAD_ECOLI</name>
<proteinExistence type="evidence at protein level"/>
<dbReference type="EMBL" id="U00096">
    <property type="protein sequence ID" value="AAC73984.1"/>
    <property type="molecule type" value="Genomic_DNA"/>
</dbReference>
<dbReference type="EMBL" id="AP009048">
    <property type="protein sequence ID" value="BAA35630.1"/>
    <property type="molecule type" value="Genomic_DNA"/>
</dbReference>
<dbReference type="EMBL" id="J03412">
    <property type="protein sequence ID" value="AAA83847.1"/>
    <property type="molecule type" value="Genomic_DNA"/>
</dbReference>
<dbReference type="PIR" id="A64829">
    <property type="entry name" value="A64829"/>
</dbReference>
<dbReference type="RefSeq" id="NP_415418.1">
    <property type="nucleotide sequence ID" value="NC_000913.3"/>
</dbReference>
<dbReference type="RefSeq" id="WP_000109259.1">
    <property type="nucleotide sequence ID" value="NZ_SSZK01000002.1"/>
</dbReference>
<dbReference type="SMR" id="P21503"/>
<dbReference type="BioGRID" id="4261691">
    <property type="interactions" value="135"/>
</dbReference>
<dbReference type="FunCoup" id="P21503">
    <property type="interactions" value="60"/>
</dbReference>
<dbReference type="STRING" id="511145.b0898"/>
<dbReference type="TCDB" id="2.A.1.26.1">
    <property type="family name" value="the major facilitator superfamily (mfs)"/>
</dbReference>
<dbReference type="PaxDb" id="511145-b0898"/>
<dbReference type="EnsemblBacteria" id="AAC73984">
    <property type="protein sequence ID" value="AAC73984"/>
    <property type="gene ID" value="b0898"/>
</dbReference>
<dbReference type="GeneID" id="945515"/>
<dbReference type="KEGG" id="ecj:JW0881"/>
<dbReference type="KEGG" id="eco:b0898"/>
<dbReference type="KEGG" id="ecoc:C3026_05550"/>
<dbReference type="PATRIC" id="fig|1411691.4.peg.1378"/>
<dbReference type="EchoBASE" id="EB1224"/>
<dbReference type="eggNOG" id="COG0477">
    <property type="taxonomic scope" value="Bacteria"/>
</dbReference>
<dbReference type="HOGENOM" id="CLU_035018_1_2_6"/>
<dbReference type="InParanoid" id="P21503"/>
<dbReference type="OMA" id="YLSHQGM"/>
<dbReference type="OrthoDB" id="9810614at2"/>
<dbReference type="PhylomeDB" id="P21503"/>
<dbReference type="BioCyc" id="EcoCyc:YCAD-MONOMER"/>
<dbReference type="PRO" id="PR:P21503"/>
<dbReference type="Proteomes" id="UP000000625">
    <property type="component" value="Chromosome"/>
</dbReference>
<dbReference type="GO" id="GO:0005886">
    <property type="term" value="C:plasma membrane"/>
    <property type="evidence" value="ECO:0000314"/>
    <property type="project" value="EcoCyc"/>
</dbReference>
<dbReference type="GO" id="GO:0022857">
    <property type="term" value="F:transmembrane transporter activity"/>
    <property type="evidence" value="ECO:0007669"/>
    <property type="project" value="UniProtKB-UniRule"/>
</dbReference>
<dbReference type="CDD" id="cd17477">
    <property type="entry name" value="MFS_YcaD_like"/>
    <property type="match status" value="1"/>
</dbReference>
<dbReference type="FunFam" id="1.20.1250.20:FF:000041">
    <property type="entry name" value="Uncharacterized MFS-type transporter YcaD"/>
    <property type="match status" value="1"/>
</dbReference>
<dbReference type="FunFam" id="1.20.1250.20:FF:000066">
    <property type="entry name" value="Uncharacterized MFS-type transporter YcaD"/>
    <property type="match status" value="1"/>
</dbReference>
<dbReference type="Gene3D" id="1.20.1250.20">
    <property type="entry name" value="MFS general substrate transporter like domains"/>
    <property type="match status" value="2"/>
</dbReference>
<dbReference type="HAMAP" id="MF_01149">
    <property type="entry name" value="MFS_YcaD"/>
    <property type="match status" value="1"/>
</dbReference>
<dbReference type="InterPro" id="IPR011701">
    <property type="entry name" value="MFS"/>
</dbReference>
<dbReference type="InterPro" id="IPR020846">
    <property type="entry name" value="MFS_dom"/>
</dbReference>
<dbReference type="InterPro" id="IPR036259">
    <property type="entry name" value="MFS_trans_sf"/>
</dbReference>
<dbReference type="InterPro" id="IPR023745">
    <property type="entry name" value="MFS_YcaD"/>
</dbReference>
<dbReference type="InterPro" id="IPR047200">
    <property type="entry name" value="MFS_YcaD-like"/>
</dbReference>
<dbReference type="NCBIfam" id="NF002962">
    <property type="entry name" value="PRK03633.1"/>
    <property type="match status" value="1"/>
</dbReference>
<dbReference type="PANTHER" id="PTHR23521">
    <property type="entry name" value="TRANSPORTER MFS SUPERFAMILY"/>
    <property type="match status" value="1"/>
</dbReference>
<dbReference type="PANTHER" id="PTHR23521:SF2">
    <property type="entry name" value="TRANSPORTER MFS SUPERFAMILY"/>
    <property type="match status" value="1"/>
</dbReference>
<dbReference type="Pfam" id="PF07690">
    <property type="entry name" value="MFS_1"/>
    <property type="match status" value="1"/>
</dbReference>
<dbReference type="SUPFAM" id="SSF103473">
    <property type="entry name" value="MFS general substrate transporter"/>
    <property type="match status" value="1"/>
</dbReference>
<dbReference type="PROSITE" id="PS50850">
    <property type="entry name" value="MFS"/>
    <property type="match status" value="1"/>
</dbReference>
<reference key="1">
    <citation type="journal article" date="1996" name="DNA Res.">
        <title>A 718-kb DNA sequence of the Escherichia coli K-12 genome corresponding to the 12.7-28.0 min region on the linkage map.</title>
        <authorList>
            <person name="Oshima T."/>
            <person name="Aiba H."/>
            <person name="Baba T."/>
            <person name="Fujita K."/>
            <person name="Hayashi K."/>
            <person name="Honjo A."/>
            <person name="Ikemoto K."/>
            <person name="Inada T."/>
            <person name="Itoh T."/>
            <person name="Kajihara M."/>
            <person name="Kanai K."/>
            <person name="Kashimoto K."/>
            <person name="Kimura S."/>
            <person name="Kitagawa M."/>
            <person name="Makino K."/>
            <person name="Masuda S."/>
            <person name="Miki T."/>
            <person name="Mizobuchi K."/>
            <person name="Mori H."/>
            <person name="Motomura K."/>
            <person name="Nakamura Y."/>
            <person name="Nashimoto H."/>
            <person name="Nishio Y."/>
            <person name="Saito N."/>
            <person name="Sampei G."/>
            <person name="Seki Y."/>
            <person name="Tagami H."/>
            <person name="Takemoto K."/>
            <person name="Wada C."/>
            <person name="Yamamoto Y."/>
            <person name="Yano M."/>
            <person name="Horiuchi T."/>
        </authorList>
    </citation>
    <scope>NUCLEOTIDE SEQUENCE [LARGE SCALE GENOMIC DNA]</scope>
    <source>
        <strain>K12 / W3110 / ATCC 27325 / DSM 5911</strain>
    </source>
</reference>
<reference key="2">
    <citation type="journal article" date="1997" name="Science">
        <title>The complete genome sequence of Escherichia coli K-12.</title>
        <authorList>
            <person name="Blattner F.R."/>
            <person name="Plunkett G. III"/>
            <person name="Bloch C.A."/>
            <person name="Perna N.T."/>
            <person name="Burland V."/>
            <person name="Riley M."/>
            <person name="Collado-Vides J."/>
            <person name="Glasner J.D."/>
            <person name="Rode C.K."/>
            <person name="Mayhew G.F."/>
            <person name="Gregor J."/>
            <person name="Davis N.W."/>
            <person name="Kirkpatrick H.A."/>
            <person name="Goeden M.A."/>
            <person name="Rose D.J."/>
            <person name="Mau B."/>
            <person name="Shao Y."/>
        </authorList>
    </citation>
    <scope>NUCLEOTIDE SEQUENCE [LARGE SCALE GENOMIC DNA]</scope>
    <source>
        <strain>K12 / MG1655 / ATCC 47076</strain>
    </source>
</reference>
<reference key="3">
    <citation type="journal article" date="2006" name="Mol. Syst. Biol.">
        <title>Highly accurate genome sequences of Escherichia coli K-12 strains MG1655 and W3110.</title>
        <authorList>
            <person name="Hayashi K."/>
            <person name="Morooka N."/>
            <person name="Yamamoto Y."/>
            <person name="Fujita K."/>
            <person name="Isono K."/>
            <person name="Choi S."/>
            <person name="Ohtsubo E."/>
            <person name="Baba T."/>
            <person name="Wanner B.L."/>
            <person name="Mori H."/>
            <person name="Horiuchi T."/>
        </authorList>
    </citation>
    <scope>NUCLEOTIDE SEQUENCE [LARGE SCALE GENOMIC DNA]</scope>
    <source>
        <strain>K12 / W3110 / ATCC 27325 / DSM 5911</strain>
    </source>
</reference>
<reference key="4">
    <citation type="journal article" date="1988" name="Mol. Microbiol.">
        <title>Nucleotide sequence of the dmsABC operon encoding the anaerobic dimethylsulphoxide reductase of Escherichia coli.</title>
        <authorList>
            <person name="Bilous P.T."/>
            <person name="Cole S.T."/>
            <person name="Anderson W.F."/>
            <person name="Weiner J.H."/>
        </authorList>
    </citation>
    <scope>NUCLEOTIDE SEQUENCE [GENOMIC DNA] OF 1-264</scope>
    <source>
        <strain>K12 / C600 / CR34 / ATCC 23724 / DSM 3925 / LMG 3041 / NCIB 10222</strain>
    </source>
</reference>
<reference key="5">
    <citation type="journal article" date="2005" name="Science">
        <title>Global topology analysis of the Escherichia coli inner membrane proteome.</title>
        <authorList>
            <person name="Daley D.O."/>
            <person name="Rapp M."/>
            <person name="Granseth E."/>
            <person name="Melen K."/>
            <person name="Drew D."/>
            <person name="von Heijne G."/>
        </authorList>
    </citation>
    <scope>TOPOLOGY [LARGE SCALE ANALYSIS]</scope>
    <source>
        <strain>K12 / MG1655 / ATCC 47076</strain>
    </source>
</reference>
<organism>
    <name type="scientific">Escherichia coli (strain K12)</name>
    <dbReference type="NCBI Taxonomy" id="83333"/>
    <lineage>
        <taxon>Bacteria</taxon>
        <taxon>Pseudomonadati</taxon>
        <taxon>Pseudomonadota</taxon>
        <taxon>Gammaproteobacteria</taxon>
        <taxon>Enterobacterales</taxon>
        <taxon>Enterobacteriaceae</taxon>
        <taxon>Escherichia</taxon>
    </lineage>
</organism>
<keyword id="KW-0997">Cell inner membrane</keyword>
<keyword id="KW-1003">Cell membrane</keyword>
<keyword id="KW-0472">Membrane</keyword>
<keyword id="KW-1185">Reference proteome</keyword>
<keyword id="KW-0812">Transmembrane</keyword>
<keyword id="KW-1133">Transmembrane helix</keyword>
<keyword id="KW-0813">Transport</keyword>
<feature type="chain" id="PRO_0000084889" description="Uncharacterized MFS-type transporter YcaD">
    <location>
        <begin position="1"/>
        <end position="382"/>
    </location>
</feature>
<feature type="topological domain" description="Cytoplasmic" evidence="1">
    <location>
        <begin position="1"/>
        <end position="13"/>
    </location>
</feature>
<feature type="transmembrane region" description="Helical" evidence="1">
    <location>
        <begin position="14"/>
        <end position="34"/>
    </location>
</feature>
<feature type="topological domain" description="Periplasmic" evidence="1">
    <location>
        <begin position="35"/>
        <end position="44"/>
    </location>
</feature>
<feature type="transmembrane region" description="Helical" evidence="1">
    <location>
        <begin position="45"/>
        <end position="65"/>
    </location>
</feature>
<feature type="topological domain" description="Cytoplasmic" evidence="1">
    <location>
        <begin position="66"/>
        <end position="78"/>
    </location>
</feature>
<feature type="transmembrane region" description="Helical" evidence="1">
    <location>
        <begin position="79"/>
        <end position="99"/>
    </location>
</feature>
<feature type="topological domain" description="Periplasmic" evidence="1">
    <location>
        <begin position="100"/>
        <end position="101"/>
    </location>
</feature>
<feature type="transmembrane region" description="Helical" evidence="1">
    <location>
        <begin position="102"/>
        <end position="122"/>
    </location>
</feature>
<feature type="topological domain" description="Cytoplasmic" evidence="1">
    <location>
        <begin position="123"/>
        <end position="130"/>
    </location>
</feature>
<feature type="transmembrane region" description="Helical" evidence="1">
    <location>
        <begin position="131"/>
        <end position="151"/>
    </location>
</feature>
<feature type="topological domain" description="Periplasmic" evidence="1">
    <location>
        <begin position="152"/>
        <end position="156"/>
    </location>
</feature>
<feature type="transmembrane region" description="Helical" evidence="1">
    <location>
        <begin position="157"/>
        <end position="177"/>
    </location>
</feature>
<feature type="topological domain" description="Cytoplasmic" evidence="1">
    <location>
        <begin position="178"/>
        <end position="203"/>
    </location>
</feature>
<feature type="transmembrane region" description="Helical" evidence="1">
    <location>
        <begin position="204"/>
        <end position="224"/>
    </location>
</feature>
<feature type="topological domain" description="Periplasmic" evidence="1">
    <location>
        <begin position="225"/>
        <end position="234"/>
    </location>
</feature>
<feature type="transmembrane region" description="Helical" evidence="1">
    <location>
        <begin position="235"/>
        <end position="255"/>
    </location>
</feature>
<feature type="topological domain" description="Cytoplasmic" evidence="1">
    <location>
        <begin position="256"/>
        <end position="269"/>
    </location>
</feature>
<feature type="transmembrane region" description="Helical" evidence="1">
    <location>
        <begin position="270"/>
        <end position="290"/>
    </location>
</feature>
<feature type="transmembrane region" description="Helical" evidence="1">
    <location>
        <begin position="291"/>
        <end position="311"/>
    </location>
</feature>
<feature type="topological domain" description="Cytoplasmic" evidence="1">
    <location>
        <begin position="312"/>
        <end position="324"/>
    </location>
</feature>
<feature type="transmembrane region" description="Helical" evidence="1">
    <location>
        <begin position="325"/>
        <end position="345"/>
    </location>
</feature>
<feature type="topological domain" description="Periplasmic" evidence="1">
    <location>
        <begin position="346"/>
        <end position="347"/>
    </location>
</feature>
<feature type="transmembrane region" description="Helical" evidence="1">
    <location>
        <begin position="348"/>
        <end position="368"/>
    </location>
</feature>
<feature type="topological domain" description="Cytoplasmic" evidence="1">
    <location>
        <begin position="369"/>
        <end position="382"/>
    </location>
</feature>
<sequence length="382" mass="41432">MSTYTQPVMLLLSGLLLLTLAIAVLNTLVPLWLAQEHMSTWQVGVVSSSYFTGNLVGTLLTGYVIKRIGFNRSYYLASFIFAAGCAGLGLMIGFWSWLAWRFVAGVGCAMIWVVVESALMCSGTSRNRGRLLAAYMMVYYVGTFLGQLLVSKVSTELMSVLPWVTGLTLAGILPLLFTRVLNQQAENHDSTSITSMLKLRQARLGVNGCIISGIVLGSLYGLMPLYLNHKGVSNASIGFWMAVLVSAGILGQWPIGRLADKFGRLLVLRVQVFVVILGSIAMLSQAAMAPALFILGAAGFTLYPVAMAWACEKVEHHQLVAMNQALLLSYTVGSLLGPSFTAMLMQNFSDNLLFIMIASVSFIYLLMLLRNAGHTPKPVAHV</sequence>